<proteinExistence type="evidence at protein level"/>
<gene>
    <name type="primary">ARPP19</name>
</gene>
<accession>Q28055</accession>
<accession>Q28054</accession>
<name>ARP19_BOVIN</name>
<dbReference type="EMBL" id="M33618">
    <property type="protein sequence ID" value="AAA30386.1"/>
    <property type="molecule type" value="mRNA"/>
</dbReference>
<dbReference type="EMBL" id="M33617">
    <property type="protein sequence ID" value="AAA30385.1"/>
    <property type="molecule type" value="mRNA"/>
</dbReference>
<dbReference type="PIR" id="B35308">
    <property type="entry name" value="B35308"/>
</dbReference>
<dbReference type="RefSeq" id="NP_001106726.1">
    <molecule id="Q28055-1"/>
    <property type="nucleotide sequence ID" value="NM_001113255.1"/>
</dbReference>
<dbReference type="RefSeq" id="NP_777130.1">
    <molecule id="Q28055-2"/>
    <property type="nucleotide sequence ID" value="NM_174705.1"/>
</dbReference>
<dbReference type="RefSeq" id="XP_005211845.2">
    <property type="nucleotide sequence ID" value="XM_005211788.3"/>
</dbReference>
<dbReference type="RefSeq" id="XP_010807630.1">
    <molecule id="Q28055-1"/>
    <property type="nucleotide sequence ID" value="XM_010809328.4"/>
</dbReference>
<dbReference type="RefSeq" id="XP_059746217.1">
    <molecule id="Q28055-2"/>
    <property type="nucleotide sequence ID" value="XM_059890234.1"/>
</dbReference>
<dbReference type="BMRB" id="Q28055"/>
<dbReference type="SMR" id="Q28055"/>
<dbReference type="FunCoup" id="Q28055">
    <property type="interactions" value="2485"/>
</dbReference>
<dbReference type="STRING" id="9913.ENSBTAP00000022929"/>
<dbReference type="iPTMnet" id="Q28055"/>
<dbReference type="PaxDb" id="9913-ENSBTAP00000022929"/>
<dbReference type="GeneID" id="282658"/>
<dbReference type="KEGG" id="bta:282658"/>
<dbReference type="CTD" id="10776"/>
<dbReference type="VEuPathDB" id="HostDB:ENSBTAG00000011022"/>
<dbReference type="eggNOG" id="KOG4076">
    <property type="taxonomic scope" value="Eukaryota"/>
</dbReference>
<dbReference type="HOGENOM" id="CLU_125025_1_0_1"/>
<dbReference type="InParanoid" id="Q28055"/>
<dbReference type="OMA" id="QMAKQKY"/>
<dbReference type="OrthoDB" id="5949865at2759"/>
<dbReference type="TreeFam" id="TF314718"/>
<dbReference type="Reactome" id="R-BTA-2465910">
    <property type="pathway name" value="MASTL Facilitates Mitotic Progression"/>
</dbReference>
<dbReference type="Proteomes" id="UP000009136">
    <property type="component" value="Chromosome 10"/>
</dbReference>
<dbReference type="Bgee" id="ENSBTAG00000011022">
    <property type="expression patterns" value="Expressed in occipital lobe and 105 other cell types or tissues"/>
</dbReference>
<dbReference type="GO" id="GO:0005737">
    <property type="term" value="C:cytoplasm"/>
    <property type="evidence" value="ECO:0000318"/>
    <property type="project" value="GO_Central"/>
</dbReference>
<dbReference type="GO" id="GO:0019212">
    <property type="term" value="F:phosphatase inhibitor activity"/>
    <property type="evidence" value="ECO:0000250"/>
    <property type="project" value="UniProtKB"/>
</dbReference>
<dbReference type="GO" id="GO:0051721">
    <property type="term" value="F:protein phosphatase 2A binding"/>
    <property type="evidence" value="ECO:0000250"/>
    <property type="project" value="UniProtKB"/>
</dbReference>
<dbReference type="GO" id="GO:0004864">
    <property type="term" value="F:protein phosphatase inhibitor activity"/>
    <property type="evidence" value="ECO:0000318"/>
    <property type="project" value="GO_Central"/>
</dbReference>
<dbReference type="GO" id="GO:0019888">
    <property type="term" value="F:protein phosphatase regulator activity"/>
    <property type="evidence" value="ECO:0000250"/>
    <property type="project" value="UniProtKB"/>
</dbReference>
<dbReference type="GO" id="GO:0051301">
    <property type="term" value="P:cell division"/>
    <property type="evidence" value="ECO:0007669"/>
    <property type="project" value="UniProtKB-KW"/>
</dbReference>
<dbReference type="GO" id="GO:0000086">
    <property type="term" value="P:G2/M transition of mitotic cell cycle"/>
    <property type="evidence" value="ECO:0000250"/>
    <property type="project" value="UniProtKB"/>
</dbReference>
<dbReference type="GO" id="GO:0000278">
    <property type="term" value="P:mitotic cell cycle"/>
    <property type="evidence" value="ECO:0000250"/>
    <property type="project" value="UniProtKB"/>
</dbReference>
<dbReference type="InterPro" id="IPR006760">
    <property type="entry name" value="Endosulphine"/>
</dbReference>
<dbReference type="PANTHER" id="PTHR10358:SF4">
    <property type="entry name" value="CAMP-REGULATED PHOSPHOPROTEIN 19"/>
    <property type="match status" value="1"/>
</dbReference>
<dbReference type="PANTHER" id="PTHR10358">
    <property type="entry name" value="ENDOSULFINE"/>
    <property type="match status" value="1"/>
</dbReference>
<dbReference type="Pfam" id="PF04667">
    <property type="entry name" value="Endosulfine"/>
    <property type="match status" value="1"/>
</dbReference>
<sequence>MSAEVPEAASAEEQKEMEDKVTSPEKAEEAKLKARYPHLGQKPGGSDFLRKRLQKGQKYFDSGDYNMAKAKMKNKQLPTATPDKTEVTGDHIPTPQDLPQRKPSLVASKLAG</sequence>
<protein>
    <recommendedName>
        <fullName evidence="2">cAMP-regulated phosphoprotein 19</fullName>
        <shortName>ARPP-19</shortName>
    </recommendedName>
</protein>
<reference key="1">
    <citation type="journal article" date="1990" name="J. Biol. Chem.">
        <title>Purification and cDNA cloning of ARPP-16, a cAMP-regulated phosphoprotein enriched in basal ganglia, and of a related phosphoprotein, ARPP-19.</title>
        <authorList>
            <person name="Horiuchi A."/>
            <person name="Williams K.R."/>
            <person name="Kurihara T."/>
            <person name="Nairn A.C."/>
            <person name="Greengard P."/>
        </authorList>
    </citation>
    <scope>NUCLEOTIDE SEQUENCE [MRNA] (ISOFORMS ARPP-16 AND ARPP-19)</scope>
    <scope>PARTIAL PROTEIN SEQUENCE</scope>
    <scope>PHOSPHORYLATION</scope>
    <scope>ACETYLATION AT SER-2</scope>
    <scope>ACETYLATION AT MET-1 (ISOFORM ARPP-16)</scope>
    <scope>MASS SPECTROMETRY</scope>
    <source>
        <tissue>Caudate nucleus</tissue>
    </source>
</reference>
<evidence type="ECO:0000250" key="1"/>
<evidence type="ECO:0000250" key="2">
    <source>
        <dbReference type="UniProtKB" id="P56211"/>
    </source>
</evidence>
<evidence type="ECO:0000250" key="3">
    <source>
        <dbReference type="UniProtKB" id="P56212"/>
    </source>
</evidence>
<evidence type="ECO:0000250" key="4">
    <source>
        <dbReference type="UniProtKB" id="Q712U5"/>
    </source>
</evidence>
<evidence type="ECO:0000256" key="5">
    <source>
        <dbReference type="SAM" id="MobiDB-lite"/>
    </source>
</evidence>
<evidence type="ECO:0000269" key="6">
    <source>
    </source>
</evidence>
<evidence type="ECO:0000303" key="7">
    <source>
    </source>
</evidence>
<evidence type="ECO:0000305" key="8"/>
<comment type="function">
    <text evidence="2 4">Protein phosphatase inhibitor that specifically inhibits protein phosphatase 2A (PP2A) during mitosis (By similarity). Inhibition of PP2A is enhanced when ARPP19 is phosphorylated (By similarity). When phosphorylated at Ser-62 during mitosis, specifically interacts with PPP2R2D (PR55-delta) and inhibits its activity, leading to inactivation of PP2A, an essential condition to keep cyclin-B1-CDK1 activity high during M phase (By similarity). May indirectly enhance GAP-43 expression (By similarity).</text>
</comment>
<comment type="subunit">
    <text evidence="2">Interacts (when phosphorylated at Ser-62) with PPP2R2D. Interacts with SNCA (By similarity). Interacts with PPP2R2A; the interaction is direct and this interaction inhibits PP2A activity (By similarity).</text>
</comment>
<comment type="subcellular location">
    <subcellularLocation>
        <location evidence="1">Cytoplasm</location>
    </subcellularLocation>
</comment>
<comment type="alternative products">
    <event type="alternative splicing"/>
    <isoform>
        <id>Q28055-1</id>
        <name>ARPP-19</name>
        <sequence type="displayed"/>
    </isoform>
    <isoform>
        <id>Q28055-2</id>
        <name>ARPP-16</name>
        <sequence type="described" ref="VSP_018554"/>
    </isoform>
</comment>
<comment type="tissue specificity">
    <text>Isoform ARPP-19 is found in all brain regions and also present in non-neuronal tissues. Isoform ARPP-16 is enriched in the caudate nucleus, found in low levels in cerebral cortex.</text>
</comment>
<comment type="PTM">
    <text evidence="1 6">Phosphorylation at Ser-62 by MASTL/GWL during mitosis is essential for interaction with PPP2R2D (PR55-delta) and subsequent inactivation of PP2A (By similarity). Phosphorylated by PKA.</text>
</comment>
<comment type="mass spectrometry"/>
<comment type="similarity">
    <text evidence="8">Belongs to the endosulfine family.</text>
</comment>
<organism>
    <name type="scientific">Bos taurus</name>
    <name type="common">Bovine</name>
    <dbReference type="NCBI Taxonomy" id="9913"/>
    <lineage>
        <taxon>Eukaryota</taxon>
        <taxon>Metazoa</taxon>
        <taxon>Chordata</taxon>
        <taxon>Craniata</taxon>
        <taxon>Vertebrata</taxon>
        <taxon>Euteleostomi</taxon>
        <taxon>Mammalia</taxon>
        <taxon>Eutheria</taxon>
        <taxon>Laurasiatheria</taxon>
        <taxon>Artiodactyla</taxon>
        <taxon>Ruminantia</taxon>
        <taxon>Pecora</taxon>
        <taxon>Bovidae</taxon>
        <taxon>Bovinae</taxon>
        <taxon>Bos</taxon>
    </lineage>
</organism>
<keyword id="KW-0007">Acetylation</keyword>
<keyword id="KW-0025">Alternative splicing</keyword>
<keyword id="KW-0131">Cell cycle</keyword>
<keyword id="KW-0132">Cell division</keyword>
<keyword id="KW-0963">Cytoplasm</keyword>
<keyword id="KW-0903">Direct protein sequencing</keyword>
<keyword id="KW-0498">Mitosis</keyword>
<keyword id="KW-0597">Phosphoprotein</keyword>
<keyword id="KW-0650">Protein phosphatase inhibitor</keyword>
<keyword id="KW-1185">Reference proteome</keyword>
<feature type="initiator methionine" description="Removed" evidence="6">
    <location>
        <position position="1"/>
    </location>
</feature>
<feature type="chain" id="PRO_0000008039" description="cAMP-regulated phosphoprotein 19">
    <location>
        <begin position="2"/>
        <end position="112"/>
    </location>
</feature>
<feature type="region of interest" description="Disordered" evidence="5">
    <location>
        <begin position="1"/>
        <end position="49"/>
    </location>
</feature>
<feature type="region of interest" description="Disordered" evidence="5">
    <location>
        <begin position="72"/>
        <end position="112"/>
    </location>
</feature>
<feature type="compositionally biased region" description="Low complexity" evidence="5">
    <location>
        <begin position="1"/>
        <end position="11"/>
    </location>
</feature>
<feature type="compositionally biased region" description="Basic and acidic residues" evidence="5">
    <location>
        <begin position="12"/>
        <end position="32"/>
    </location>
</feature>
<feature type="modified residue" description="N-acetylserine" evidence="6">
    <location>
        <position position="2"/>
    </location>
</feature>
<feature type="modified residue" description="Phosphoserine" evidence="2">
    <location>
        <position position="2"/>
    </location>
</feature>
<feature type="modified residue" description="Phosphoserine" evidence="2">
    <location>
        <position position="23"/>
    </location>
</feature>
<feature type="modified residue" description="Phosphoserine; by GWL" evidence="2">
    <location>
        <position position="62"/>
    </location>
</feature>
<feature type="modified residue" description="Phosphoserine; by GWL" evidence="2">
    <location>
        <position position="104"/>
    </location>
</feature>
<feature type="modified residue" description="Phosphoserine; by PKA" evidence="3">
    <location>
        <position position="104"/>
    </location>
</feature>
<feature type="modified residue" description="N6-acetyllysine" evidence="2">
    <location>
        <position position="109"/>
    </location>
</feature>
<feature type="splice variant" id="VSP_018554" description="In isoform ARPP-16." evidence="7">
    <location>
        <begin position="1"/>
        <end position="16"/>
    </location>
</feature>
<feature type="modified residue" description="N-acetylmethionine" evidence="6">
    <location sequence="Q28055-2">
        <position position="1"/>
    </location>
</feature>